<reference key="1">
    <citation type="submission" date="2010-03" db="EMBL/GenBank/DDBJ databases">
        <title>The complete genome of Propionibacterium acnes SK137.</title>
        <authorList>
            <person name="Harkins D.M."/>
            <person name="Madupu R."/>
            <person name="Durkin A.S."/>
            <person name="Torralba M."/>
            <person name="Methe B."/>
            <person name="Sutton G.G."/>
            <person name="Nelson K.E."/>
        </authorList>
    </citation>
    <scope>NUCLEOTIDE SEQUENCE [LARGE SCALE GENOMIC DNA]</scope>
    <source>
        <strain>SK137</strain>
    </source>
</reference>
<protein>
    <recommendedName>
        <fullName>Biotin biosynthesis bifunctional protein BioWF</fullName>
    </recommendedName>
    <domain>
        <recommendedName>
            <fullName>6-carboxyhexanoate--CoA ligase</fullName>
            <ecNumber>6.2.1.14</ecNumber>
        </recommendedName>
        <alternativeName>
            <fullName>Pimeloyl-CoA synthase</fullName>
        </alternativeName>
    </domain>
    <domain>
        <recommendedName>
            <fullName>8-amino-7-oxononanoate synthase</fullName>
            <shortName>AONS</shortName>
            <ecNumber>2.3.1.47</ecNumber>
        </recommendedName>
        <alternativeName>
            <fullName>7-keto-8-amino-pelargonic acid synthase</fullName>
            <shortName>7-KAP synthase</shortName>
        </alternativeName>
        <alternativeName>
            <fullName>8-amino-7-ketopelargonate synthase</fullName>
        </alternativeName>
    </domain>
</protein>
<gene>
    <name type="ordered locus">HMPREF0675_4919</name>
</gene>
<evidence type="ECO:0000250" key="1"/>
<evidence type="ECO:0000305" key="2"/>
<comment type="function">
    <text evidence="1">Catalyzes both the decarboxylative condensation of pimeloyl-[acyl-carrier protein] and L-alanine to produce 8-amino-7-oxononanoate (AON), [acyl-carrier protein], and carbon dioxide, and the transformation of pimelate into pimeloyl-CoA with concomitant hydrolysis of ATP to AMP.</text>
</comment>
<comment type="catalytic activity">
    <reaction>
        <text>heptanedioate + ATP + CoA = 6-carboxyhexanoyl-CoA + AMP + diphosphate</text>
        <dbReference type="Rhea" id="RHEA:14781"/>
        <dbReference type="ChEBI" id="CHEBI:30616"/>
        <dbReference type="ChEBI" id="CHEBI:33019"/>
        <dbReference type="ChEBI" id="CHEBI:36165"/>
        <dbReference type="ChEBI" id="CHEBI:57287"/>
        <dbReference type="ChEBI" id="CHEBI:57360"/>
        <dbReference type="ChEBI" id="CHEBI:456215"/>
        <dbReference type="EC" id="6.2.1.14"/>
    </reaction>
</comment>
<comment type="catalytic activity">
    <reaction>
        <text>6-carboxyhexanoyl-[ACP] + L-alanine + H(+) = (8S)-8-amino-7-oxononanoate + holo-[ACP] + CO2</text>
        <dbReference type="Rhea" id="RHEA:42288"/>
        <dbReference type="Rhea" id="RHEA-COMP:9685"/>
        <dbReference type="Rhea" id="RHEA-COMP:9955"/>
        <dbReference type="ChEBI" id="CHEBI:15378"/>
        <dbReference type="ChEBI" id="CHEBI:16526"/>
        <dbReference type="ChEBI" id="CHEBI:57972"/>
        <dbReference type="ChEBI" id="CHEBI:64479"/>
        <dbReference type="ChEBI" id="CHEBI:78846"/>
        <dbReference type="ChEBI" id="CHEBI:149468"/>
        <dbReference type="EC" id="2.3.1.47"/>
    </reaction>
</comment>
<comment type="cofactor">
    <cofactor evidence="1">
        <name>Mg(2+)</name>
        <dbReference type="ChEBI" id="CHEBI:18420"/>
    </cofactor>
</comment>
<comment type="cofactor">
    <cofactor evidence="1">
        <name>pyridoxal 5'-phosphate</name>
        <dbReference type="ChEBI" id="CHEBI:597326"/>
    </cofactor>
</comment>
<comment type="pathway">
    <text>Metabolic intermediate metabolism; pimeloyl-CoA biosynthesis; pimeloyl-CoA from pimelate: step 1/1.</text>
</comment>
<comment type="pathway">
    <text>Cofactor biosynthesis; biotin biosynthesis.</text>
</comment>
<comment type="subunit">
    <text evidence="1">Homodimer.</text>
</comment>
<comment type="similarity">
    <text evidence="2">In the N-terminal section; belongs to the BioW family.</text>
</comment>
<comment type="similarity">
    <text evidence="2">In the C-terminal section; belongs to the class-II pyridoxal-phosphate-dependent aminotransferase family. BioF subfamily.</text>
</comment>
<proteinExistence type="inferred from homology"/>
<name>BIOWF_CUTAS</name>
<accession>D4H9Y2</accession>
<organism>
    <name type="scientific">Cutibacterium acnes (strain SK137)</name>
    <name type="common">Propionibacterium acnes</name>
    <dbReference type="NCBI Taxonomy" id="553199"/>
    <lineage>
        <taxon>Bacteria</taxon>
        <taxon>Bacillati</taxon>
        <taxon>Actinomycetota</taxon>
        <taxon>Actinomycetes</taxon>
        <taxon>Propionibacteriales</taxon>
        <taxon>Propionibacteriaceae</taxon>
        <taxon>Cutibacterium</taxon>
    </lineage>
</organism>
<feature type="chain" id="PRO_0000412106" description="Biotin biosynthesis bifunctional protein BioWF">
    <location>
        <begin position="1"/>
        <end position="668"/>
    </location>
</feature>
<feature type="binding site" evidence="1">
    <location>
        <position position="293"/>
    </location>
    <ligand>
        <name>substrate</name>
    </ligand>
</feature>
<feature type="binding site" evidence="1">
    <location>
        <begin position="380"/>
        <end position="381"/>
    </location>
    <ligand>
        <name>pyridoxal 5'-phosphate</name>
        <dbReference type="ChEBI" id="CHEBI:597326"/>
    </ligand>
</feature>
<feature type="binding site" evidence="1">
    <location>
        <position position="405"/>
    </location>
    <ligand>
        <name>substrate</name>
    </ligand>
</feature>
<feature type="binding site" evidence="1">
    <location>
        <position position="451"/>
    </location>
    <ligand>
        <name>pyridoxal 5'-phosphate</name>
        <dbReference type="ChEBI" id="CHEBI:597326"/>
    </ligand>
</feature>
<feature type="binding site" evidence="1">
    <location>
        <begin position="476"/>
        <end position="479"/>
    </location>
    <ligand>
        <name>pyridoxal 5'-phosphate</name>
        <dbReference type="ChEBI" id="CHEBI:597326"/>
    </ligand>
</feature>
<feature type="binding site" evidence="1">
    <location>
        <begin position="507"/>
        <end position="510"/>
    </location>
    <ligand>
        <name>pyridoxal 5'-phosphate</name>
        <dbReference type="ChEBI" id="CHEBI:597326"/>
    </ligand>
</feature>
<feature type="modified residue" description="N6-(pyridoxal phosphate)lysine" evidence="1">
    <location>
        <position position="510"/>
    </location>
</feature>
<dbReference type="EC" id="6.2.1.14"/>
<dbReference type="EC" id="2.3.1.47"/>
<dbReference type="EMBL" id="CP001977">
    <property type="protein sequence ID" value="ADD99092.1"/>
    <property type="molecule type" value="Genomic_DNA"/>
</dbReference>
<dbReference type="SMR" id="D4H9Y2"/>
<dbReference type="KEGG" id="pak:HMPREF0675_4919"/>
<dbReference type="HOGENOM" id="CLU_028958_0_0_11"/>
<dbReference type="UniPathway" id="UPA00078"/>
<dbReference type="UniPathway" id="UPA00999">
    <property type="reaction ID" value="UER00351"/>
</dbReference>
<dbReference type="GO" id="GO:0042410">
    <property type="term" value="F:6-carboxyhexanoate-CoA ligase activity"/>
    <property type="evidence" value="ECO:0007669"/>
    <property type="project" value="UniProtKB-EC"/>
</dbReference>
<dbReference type="GO" id="GO:0008710">
    <property type="term" value="F:8-amino-7-oxononanoate synthase activity"/>
    <property type="evidence" value="ECO:0007669"/>
    <property type="project" value="UniProtKB-EC"/>
</dbReference>
<dbReference type="GO" id="GO:0005524">
    <property type="term" value="F:ATP binding"/>
    <property type="evidence" value="ECO:0007669"/>
    <property type="project" value="UniProtKB-KW"/>
</dbReference>
<dbReference type="GO" id="GO:0030170">
    <property type="term" value="F:pyridoxal phosphate binding"/>
    <property type="evidence" value="ECO:0007669"/>
    <property type="project" value="InterPro"/>
</dbReference>
<dbReference type="GO" id="GO:0009102">
    <property type="term" value="P:biotin biosynthetic process"/>
    <property type="evidence" value="ECO:0007669"/>
    <property type="project" value="UniProtKB-UniPathway"/>
</dbReference>
<dbReference type="Gene3D" id="3.90.1150.10">
    <property type="entry name" value="Aspartate Aminotransferase, domain 1"/>
    <property type="match status" value="1"/>
</dbReference>
<dbReference type="Gene3D" id="3.40.640.10">
    <property type="entry name" value="Type I PLP-dependent aspartate aminotransferase-like (Major domain)"/>
    <property type="match status" value="1"/>
</dbReference>
<dbReference type="InterPro" id="IPR004839">
    <property type="entry name" value="Aminotransferase_I/II_large"/>
</dbReference>
<dbReference type="InterPro" id="IPR050087">
    <property type="entry name" value="AON_synthase_class-II"/>
</dbReference>
<dbReference type="InterPro" id="IPR005499">
    <property type="entry name" value="BioW"/>
</dbReference>
<dbReference type="InterPro" id="IPR015424">
    <property type="entry name" value="PyrdxlP-dep_Trfase"/>
</dbReference>
<dbReference type="InterPro" id="IPR015421">
    <property type="entry name" value="PyrdxlP-dep_Trfase_major"/>
</dbReference>
<dbReference type="InterPro" id="IPR015422">
    <property type="entry name" value="PyrdxlP-dep_Trfase_small"/>
</dbReference>
<dbReference type="PANTHER" id="PTHR13693:SF100">
    <property type="entry name" value="8-AMINO-7-OXONONANOATE SYNTHASE"/>
    <property type="match status" value="1"/>
</dbReference>
<dbReference type="PANTHER" id="PTHR13693">
    <property type="entry name" value="CLASS II AMINOTRANSFERASE/8-AMINO-7-OXONONANOATE SYNTHASE"/>
    <property type="match status" value="1"/>
</dbReference>
<dbReference type="Pfam" id="PF00155">
    <property type="entry name" value="Aminotran_1_2"/>
    <property type="match status" value="1"/>
</dbReference>
<dbReference type="Pfam" id="PF03744">
    <property type="entry name" value="BioW"/>
    <property type="match status" value="1"/>
</dbReference>
<dbReference type="SUPFAM" id="SSF53383">
    <property type="entry name" value="PLP-dependent transferases"/>
    <property type="match status" value="1"/>
</dbReference>
<keyword id="KW-0067">ATP-binding</keyword>
<keyword id="KW-0093">Biotin biosynthesis</keyword>
<keyword id="KW-0436">Ligase</keyword>
<keyword id="KW-0460">Magnesium</keyword>
<keyword id="KW-0511">Multifunctional enzyme</keyword>
<keyword id="KW-0547">Nucleotide-binding</keyword>
<keyword id="KW-0663">Pyridoxal phosphate</keyword>
<keyword id="KW-0808">Transferase</keyword>
<sequence>MVFNCYPVANAEESPMSSQNPTTVAWWSVRMRATGTLDDEPYHVSGAESLVAPGMIEQTVAGLTQRALAPGHTVKARQVRVSLDQLDVEPTIIPALPTELKECPDPVAARQYFVDVLSRFVPHPAEALRVLTEGPTMRGAAMVEAGTDRRLEADPLRGVRVTKFGDLTESAPGASLAHKKHHHEAVLLASKVAAAPGVLAEFCISDDPHYTRGYVCVDGVYTTVTNVKADGDPNGGRVILVDTARADPTTITTWLENHPVLIGPATASSQKATSWHGHLCGRLNAWRAAGLERRPRTFCSAQDPDAVTTDGPALLFSSSDYLGLSTEPKVQQAMNNTVRRLGSSSGGSRLTTGTSVAHHQAEHEIAAWLGYPQAVFMASGYQANIATIQLLADPHVTVISDAENHASLIDGCRLARARTVVVPHADLDVIDTALDCVTTDRALVLTEGVYSMGGDVAPVGELVEIAHRHGALVVVDDAHGIGTVGPTGRGATEELPASQRPDVLLGTASKALGVEGGFACLDETLATLMRNCARGYVFSSAPSPVVAAGVAAAVEYLRTDTRRVCSLQANVAQARLLLAEADLIPPSAAHDRGPIIRIPVGPESRAVAAQEELARRGLMVGAIRYPAVARGDAILRICLTARHTDEHIRILVTSLREVLDGALSDAPR</sequence>